<reference key="1">
    <citation type="journal article" date="2001" name="Nat. Med.">
        <title>A novel erythroid-specific marker of transmissible spongiform encephalopathies.</title>
        <authorList>
            <person name="Miele G."/>
            <person name="Manson J."/>
            <person name="Clinton M."/>
        </authorList>
    </citation>
    <scope>NUCLEOTIDE SEQUENCE [MRNA]</scope>
    <scope>TISSUE SPECIFICITY</scope>
</reference>
<reference key="2">
    <citation type="journal article" date="2000" name="Genome Res.">
        <title>Cloning and functional analysis of cDNAs with open reading frames for 300 previously undefined genes expressed in CD34+ hematopoietic stem/progenitor cells.</title>
        <authorList>
            <person name="Zhang Q.-H."/>
            <person name="Ye M."/>
            <person name="Wu X.-Y."/>
            <person name="Ren S.-X."/>
            <person name="Zhao M."/>
            <person name="Zhao C.-J."/>
            <person name="Fu G."/>
            <person name="Shen Y."/>
            <person name="Fan H.-Y."/>
            <person name="Lu G."/>
            <person name="Zhong M."/>
            <person name="Xu X.-R."/>
            <person name="Han Z.-G."/>
            <person name="Zhang J.-W."/>
            <person name="Tao J."/>
            <person name="Huang Q.-H."/>
            <person name="Zhou J."/>
            <person name="Hu G.-X."/>
            <person name="Gu J."/>
            <person name="Chen S.-J."/>
            <person name="Chen Z."/>
        </authorList>
    </citation>
    <scope>NUCLEOTIDE SEQUENCE [LARGE SCALE MRNA]</scope>
    <source>
        <tissue>Umbilical cord blood</tissue>
    </source>
</reference>
<reference key="3">
    <citation type="submission" date="2002-01" db="EMBL/GenBank/DDBJ databases">
        <authorList>
            <person name="Michel U."/>
            <person name="Schulz-Schaeffer W."/>
        </authorList>
    </citation>
    <scope>NUCLEOTIDE SEQUENCE [GENOMIC DNA]</scope>
</reference>
<reference key="4">
    <citation type="submission" date="2002-02" db="EMBL/GenBank/DDBJ databases">
        <authorList>
            <person name="Finning K."/>
            <person name="Anstee D."/>
        </authorList>
    </citation>
    <scope>NUCLEOTIDE SEQUENCE [GENOMIC DNA]</scope>
</reference>
<reference key="5">
    <citation type="journal article" date="2004" name="Genome Res.">
        <title>The status, quality, and expansion of the NIH full-length cDNA project: the Mammalian Gene Collection (MGC).</title>
        <authorList>
            <consortium name="The MGC Project Team"/>
        </authorList>
    </citation>
    <scope>NUCLEOTIDE SEQUENCE [LARGE SCALE MRNA]</scope>
</reference>
<reference key="6">
    <citation type="journal article" date="2002" name="Nature">
        <title>An abundant erythroid protein that stabilizes free alpha-haemoglobin.</title>
        <authorList>
            <person name="Kihm A.J."/>
            <person name="Kong Y."/>
            <person name="Hong W."/>
            <person name="Russell J.E."/>
            <person name="Rouda S."/>
            <person name="Adachi K."/>
            <person name="Simon M.C."/>
            <person name="Blobel G.A."/>
            <person name="Weiss M.J."/>
        </authorList>
    </citation>
    <scope>FUNCTION</scope>
    <scope>SUBCELLULAR LOCATION</scope>
    <scope>TISSUE SPECIFICITY</scope>
</reference>
<reference key="7">
    <citation type="journal article" date="2002" name="J. Biol. Chem.">
        <title>Biophysical characterization of the alpha-globin binding protein alpha-hemoglobin stabilizing protein.</title>
        <authorList>
            <person name="Gell D."/>
            <person name="Kong Y."/>
            <person name="Eaton S.A."/>
            <person name="Weiss M.J."/>
            <person name="Mackay J.P."/>
        </authorList>
    </citation>
    <scope>CHARACTERIZATION</scope>
</reference>
<reference key="8">
    <citation type="journal article" date="2004" name="Cell">
        <title>Molecular mechanism of AHSP-mediated stabilization of alpha-hemoglobin.</title>
        <authorList>
            <person name="Feng L."/>
            <person name="Gell D.A."/>
            <person name="Zhou S."/>
            <person name="Gu L."/>
            <person name="Kong Y."/>
            <person name="Li J."/>
            <person name="Hu M."/>
            <person name="Yan N."/>
            <person name="Lee C."/>
            <person name="Rich A.M."/>
            <person name="Armstrong R.S."/>
            <person name="Lay P.A."/>
            <person name="Gow A.J."/>
            <person name="Weiss M.J."/>
            <person name="Mackay J.P."/>
            <person name="Shi Y."/>
        </authorList>
    </citation>
    <scope>STRUCTURE BY NMR OF 1-90</scope>
    <scope>X-RAY CRYSTALLOGRAPHY (2.8 ANGSTROMS) IN COMPLEX WITH HBA</scope>
</reference>
<reference key="9">
    <citation type="journal article" date="2004" name="J. Biol. Chem.">
        <title>NMR structure of the alpha-hemoglobin stabilizing protein: insights into conformational heterogeneity and binding.</title>
        <authorList>
            <person name="Santiveri C.M."/>
            <person name="Perez-Canadillas J.M."/>
            <person name="Vadivelu M.K."/>
            <person name="Allen M.D."/>
            <person name="Rutherford T.J."/>
            <person name="Watkins N.A."/>
            <person name="Bycroft M."/>
        </authorList>
    </citation>
    <scope>STRUCTURE BY NMR OF 2-102 OF WILD TYPE AND MUTANT ALA-30</scope>
</reference>
<reference key="10">
    <citation type="journal article" date="2005" name="Nature">
        <title>Structure of oxidized alpha-haemoglobin bound to AHSP reveals a protective mechanism for haem.</title>
        <authorList>
            <person name="Feng L."/>
            <person name="Zhou S."/>
            <person name="Gu L."/>
            <person name="Gell D.A."/>
            <person name="Mackay J.P."/>
            <person name="Weiss M.J."/>
            <person name="Gow A.J."/>
            <person name="Shi Y."/>
        </authorList>
    </citation>
    <scope>X-RAY CRYSTALLOGRAPHY (2.4 ANGSTROMS) IN COMPLEX WITH HBA</scope>
</reference>
<comment type="function">
    <text evidence="2">Acts as a chaperone to prevent the harmful aggregation of alpha-hemoglobin during normal erythroid cell development. Specifically protects free alpha-hemoglobin from precipitation. It is predicted to modulate pathological states of alpha-hemoglobin excess such as beta-thalassemia.</text>
</comment>
<comment type="subunit">
    <text evidence="3 4">Monomer. Forms a heterodimer with free alpha-hemoglobin. Does not bind beta-hemoglobin nor alpha(2)beta(2) hemoglobin A.</text>
</comment>
<comment type="interaction">
    <interactant intactId="EBI-720250">
        <id>Q9NZD4</id>
    </interactant>
    <interactant intactId="EBI-9657824">
        <id>Q8IUQ0</id>
        <label>CLVS1</label>
    </interactant>
    <organismsDiffer>false</organismsDiffer>
    <experiments>3</experiments>
</comment>
<comment type="interaction">
    <interactant intactId="EBI-720250">
        <id>Q9NZD4</id>
    </interactant>
    <interactant intactId="EBI-1027571">
        <id>P62942</id>
        <label>FKBP1A</label>
    </interactant>
    <organismsDiffer>false</organismsDiffer>
    <experiments>3</experiments>
</comment>
<comment type="interaction">
    <interactant intactId="EBI-720250">
        <id>Q9NZD4</id>
    </interactant>
    <interactant intactId="EBI-714680">
        <id>P69905</id>
        <label>HBA2</label>
    </interactant>
    <organismsDiffer>false</organismsDiffer>
    <experiments>2</experiments>
</comment>
<comment type="interaction">
    <interactant intactId="EBI-720250">
        <id>Q9NZD4</id>
    </interactant>
    <interactant intactId="EBI-372273">
        <id>P20618</id>
        <label>PSMB1</label>
    </interactant>
    <organismsDiffer>false</organismsDiffer>
    <experiments>3</experiments>
</comment>
<comment type="interaction">
    <interactant intactId="EBI-720250">
        <id>Q9NZD4</id>
    </interactant>
    <interactant intactId="EBI-10175863">
        <id>Q05086-2</id>
        <label>UBE3A</label>
    </interactant>
    <organismsDiffer>false</organismsDiffer>
    <experiments>3</experiments>
</comment>
<comment type="interaction">
    <interactant intactId="EBI-720250">
        <id>Q9NZD4</id>
    </interactant>
    <interactant intactId="EBI-9031083">
        <id>Q9Y2B5</id>
        <label>VPS9D1</label>
    </interactant>
    <organismsDiffer>false</organismsDiffer>
    <experiments>3</experiments>
</comment>
<comment type="interaction">
    <interactant intactId="EBI-720250">
        <id>Q9NZD4</id>
    </interactant>
    <interactant intactId="EBI-747793">
        <id>Q5D1E8</id>
        <label>ZC3H12A</label>
    </interactant>
    <organismsDiffer>false</organismsDiffer>
    <experiments>4</experiments>
</comment>
<comment type="interaction">
    <interactant intactId="EBI-720250">
        <id>Q9NZD4</id>
    </interactant>
    <interactant intactId="EBI-717634">
        <id>P17024</id>
        <label>ZNF20</label>
    </interactant>
    <organismsDiffer>false</organismsDiffer>
    <experiments>3</experiments>
</comment>
<comment type="subcellular location">
    <subcellularLocation>
        <location evidence="2">Cytoplasm</location>
    </subcellularLocation>
</comment>
<comment type="tissue specificity">
    <text evidence="1 2">Expressed in blood and bone marrow.</text>
</comment>
<comment type="induction">
    <text>By GATA1 during erythroid maturation.</text>
</comment>
<comment type="similarity">
    <text evidence="5">Belongs to the AHSP family.</text>
</comment>
<gene>
    <name type="primary">AHSP</name>
    <name type="synonym">EDRF</name>
    <name type="synonym">ERAF</name>
</gene>
<keyword id="KW-0002">3D-structure</keyword>
<keyword id="KW-0143">Chaperone</keyword>
<keyword id="KW-0963">Cytoplasm</keyword>
<keyword id="KW-1267">Proteomics identification</keyword>
<keyword id="KW-1185">Reference proteome</keyword>
<dbReference type="EMBL" id="AF364517">
    <property type="protein sequence ID" value="AAK50856.1"/>
    <property type="molecule type" value="mRNA"/>
</dbReference>
<dbReference type="EMBL" id="AF208865">
    <property type="protein sequence ID" value="AAF64279.1"/>
    <property type="molecule type" value="mRNA"/>
</dbReference>
<dbReference type="EMBL" id="AY072612">
    <property type="protein sequence ID" value="AAL82894.1"/>
    <property type="molecule type" value="Genomic_DNA"/>
</dbReference>
<dbReference type="EMBL" id="AF485325">
    <property type="protein sequence ID" value="AAO49381.1"/>
    <property type="molecule type" value="Genomic_DNA"/>
</dbReference>
<dbReference type="EMBL" id="BC035842">
    <property type="protein sequence ID" value="AAH35842.1"/>
    <property type="molecule type" value="mRNA"/>
</dbReference>
<dbReference type="CCDS" id="CCDS10716.1"/>
<dbReference type="RefSeq" id="NP_001305150.1">
    <property type="nucleotide sequence ID" value="NM_001318221.2"/>
</dbReference>
<dbReference type="RefSeq" id="NP_001305151.1">
    <property type="nucleotide sequence ID" value="NM_001318222.2"/>
</dbReference>
<dbReference type="RefSeq" id="NP_057717.1">
    <property type="nucleotide sequence ID" value="NM_016633.4"/>
</dbReference>
<dbReference type="PDB" id="1W09">
    <property type="method" value="NMR"/>
    <property type="chains" value="A=3-94"/>
</dbReference>
<dbReference type="PDB" id="1W0A">
    <property type="method" value="NMR"/>
    <property type="chains" value="A=3-94"/>
</dbReference>
<dbReference type="PDB" id="1W0B">
    <property type="method" value="NMR"/>
    <property type="chains" value="A=2-102"/>
</dbReference>
<dbReference type="PDB" id="1XZY">
    <property type="method" value="NMR"/>
    <property type="chains" value="A=1-90"/>
</dbReference>
<dbReference type="PDB" id="1Y01">
    <property type="method" value="X-ray"/>
    <property type="resolution" value="2.80 A"/>
    <property type="chains" value="A=1-102"/>
</dbReference>
<dbReference type="PDB" id="1Z8U">
    <property type="method" value="X-ray"/>
    <property type="resolution" value="2.40 A"/>
    <property type="chains" value="A/C=1-102"/>
</dbReference>
<dbReference type="PDB" id="3IA3">
    <property type="method" value="X-ray"/>
    <property type="resolution" value="3.20 A"/>
    <property type="chains" value="A/C=1-91"/>
</dbReference>
<dbReference type="PDB" id="3OVU">
    <property type="method" value="X-ray"/>
    <property type="resolution" value="2.83 A"/>
    <property type="chains" value="A=2-102"/>
</dbReference>
<dbReference type="PDBsum" id="1W09"/>
<dbReference type="PDBsum" id="1W0A"/>
<dbReference type="PDBsum" id="1W0B"/>
<dbReference type="PDBsum" id="1XZY"/>
<dbReference type="PDBsum" id="1Y01"/>
<dbReference type="PDBsum" id="1Z8U"/>
<dbReference type="PDBsum" id="3IA3"/>
<dbReference type="PDBsum" id="3OVU"/>
<dbReference type="BMRB" id="Q9NZD4"/>
<dbReference type="SMR" id="Q9NZD4"/>
<dbReference type="BioGRID" id="119476">
    <property type="interactions" value="16"/>
</dbReference>
<dbReference type="DIP" id="DIP-35198N"/>
<dbReference type="FunCoup" id="Q9NZD4">
    <property type="interactions" value="15"/>
</dbReference>
<dbReference type="IntAct" id="Q9NZD4">
    <property type="interactions" value="14"/>
</dbReference>
<dbReference type="STRING" id="9606.ENSP00000307199"/>
<dbReference type="DrugBank" id="DB14490">
    <property type="generic name" value="Ferrous ascorbate"/>
</dbReference>
<dbReference type="DrugBank" id="DB14491">
    <property type="generic name" value="Ferrous fumarate"/>
</dbReference>
<dbReference type="DrugBank" id="DB14488">
    <property type="generic name" value="Ferrous gluconate"/>
</dbReference>
<dbReference type="DrugBank" id="DB14501">
    <property type="generic name" value="Ferrous glycine sulfate"/>
</dbReference>
<dbReference type="DrugBank" id="DB14489">
    <property type="generic name" value="Ferrous succinate"/>
</dbReference>
<dbReference type="DrugBank" id="DB01592">
    <property type="generic name" value="Iron"/>
</dbReference>
<dbReference type="BioMuta" id="AHSP"/>
<dbReference type="DMDM" id="23813669"/>
<dbReference type="MassIVE" id="Q9NZD4"/>
<dbReference type="PaxDb" id="9606-ENSP00000307199"/>
<dbReference type="PeptideAtlas" id="Q9NZD4"/>
<dbReference type="ProteomicsDB" id="83376"/>
<dbReference type="Pumba" id="Q9NZD4"/>
<dbReference type="TopDownProteomics" id="Q9NZD4"/>
<dbReference type="Antibodypedia" id="27920">
    <property type="antibodies" value="183 antibodies from 23 providers"/>
</dbReference>
<dbReference type="DNASU" id="51327"/>
<dbReference type="Ensembl" id="ENST00000302312.9">
    <property type="protein sequence ID" value="ENSP00000307199.4"/>
    <property type="gene ID" value="ENSG00000169877.10"/>
</dbReference>
<dbReference type="GeneID" id="51327"/>
<dbReference type="KEGG" id="hsa:51327"/>
<dbReference type="MANE-Select" id="ENST00000302312.9">
    <property type="protein sequence ID" value="ENSP00000307199.4"/>
    <property type="RefSeq nucleotide sequence ID" value="NM_016633.4"/>
    <property type="RefSeq protein sequence ID" value="NP_057717.1"/>
</dbReference>
<dbReference type="UCSC" id="uc002ecj.4">
    <property type="organism name" value="human"/>
</dbReference>
<dbReference type="AGR" id="HGNC:18075"/>
<dbReference type="CTD" id="51327"/>
<dbReference type="DisGeNET" id="51327"/>
<dbReference type="GeneCards" id="AHSP"/>
<dbReference type="HGNC" id="HGNC:18075">
    <property type="gene designation" value="AHSP"/>
</dbReference>
<dbReference type="HPA" id="ENSG00000169877">
    <property type="expression patterns" value="Tissue enriched (bone)"/>
</dbReference>
<dbReference type="MIM" id="605821">
    <property type="type" value="gene"/>
</dbReference>
<dbReference type="neXtProt" id="NX_Q9NZD4"/>
<dbReference type="OpenTargets" id="ENSG00000169877"/>
<dbReference type="PharmGKB" id="PA27842"/>
<dbReference type="VEuPathDB" id="HostDB:ENSG00000169877"/>
<dbReference type="eggNOG" id="ENOG502SXDF">
    <property type="taxonomic scope" value="Eukaryota"/>
</dbReference>
<dbReference type="GeneTree" id="ENSGT00390000003648"/>
<dbReference type="HOGENOM" id="CLU_188032_0_0_1"/>
<dbReference type="InParanoid" id="Q9NZD4"/>
<dbReference type="OMA" id="DWIKFYL"/>
<dbReference type="OrthoDB" id="9827643at2759"/>
<dbReference type="PAN-GO" id="Q9NZD4">
    <property type="GO annotations" value="4 GO annotations based on evolutionary models"/>
</dbReference>
<dbReference type="PhylomeDB" id="Q9NZD4"/>
<dbReference type="TreeFam" id="TF337056"/>
<dbReference type="PathwayCommons" id="Q9NZD4"/>
<dbReference type="SignaLink" id="Q9NZD4"/>
<dbReference type="SIGNOR" id="Q9NZD4"/>
<dbReference type="BioGRID-ORCS" id="51327">
    <property type="hits" value="10 hits in 1157 CRISPR screens"/>
</dbReference>
<dbReference type="ChiTaRS" id="AHSP">
    <property type="organism name" value="human"/>
</dbReference>
<dbReference type="EvolutionaryTrace" id="Q9NZD4"/>
<dbReference type="GeneWiki" id="ERAF"/>
<dbReference type="GenomeRNAi" id="51327"/>
<dbReference type="Pharos" id="Q9NZD4">
    <property type="development level" value="Tbio"/>
</dbReference>
<dbReference type="PRO" id="PR:Q9NZD4"/>
<dbReference type="Proteomes" id="UP000005640">
    <property type="component" value="Chromosome 16"/>
</dbReference>
<dbReference type="RNAct" id="Q9NZD4">
    <property type="molecule type" value="protein"/>
</dbReference>
<dbReference type="Bgee" id="ENSG00000169877">
    <property type="expression patterns" value="Expressed in trabecular bone tissue and 115 other cell types or tissues"/>
</dbReference>
<dbReference type="ExpressionAtlas" id="Q9NZD4">
    <property type="expression patterns" value="baseline and differential"/>
</dbReference>
<dbReference type="GO" id="GO:0005737">
    <property type="term" value="C:cytoplasm"/>
    <property type="evidence" value="ECO:0000318"/>
    <property type="project" value="GO_Central"/>
</dbReference>
<dbReference type="GO" id="GO:0005833">
    <property type="term" value="C:hemoglobin complex"/>
    <property type="evidence" value="ECO:0000303"/>
    <property type="project" value="UniProtKB"/>
</dbReference>
<dbReference type="GO" id="GO:0030492">
    <property type="term" value="F:hemoglobin binding"/>
    <property type="evidence" value="ECO:0000303"/>
    <property type="project" value="UniProtKB"/>
</dbReference>
<dbReference type="GO" id="GO:0051082">
    <property type="term" value="F:unfolded protein binding"/>
    <property type="evidence" value="ECO:0000303"/>
    <property type="project" value="UniProtKB"/>
</dbReference>
<dbReference type="GO" id="GO:0030218">
    <property type="term" value="P:erythrocyte differentiation"/>
    <property type="evidence" value="ECO:0000318"/>
    <property type="project" value="GO_Central"/>
</dbReference>
<dbReference type="GO" id="GO:0020027">
    <property type="term" value="P:hemoglobin metabolic process"/>
    <property type="evidence" value="ECO:0000303"/>
    <property type="project" value="UniProtKB"/>
</dbReference>
<dbReference type="GO" id="GO:0030097">
    <property type="term" value="P:hemopoiesis"/>
    <property type="evidence" value="ECO:0000303"/>
    <property type="project" value="UniProtKB"/>
</dbReference>
<dbReference type="GO" id="GO:0006457">
    <property type="term" value="P:protein folding"/>
    <property type="evidence" value="ECO:0000318"/>
    <property type="project" value="GO_Central"/>
</dbReference>
<dbReference type="GO" id="GO:0050821">
    <property type="term" value="P:protein stabilization"/>
    <property type="evidence" value="ECO:0000318"/>
    <property type="project" value="GO_Central"/>
</dbReference>
<dbReference type="FunFam" id="1.20.58.420:FF:000002">
    <property type="entry name" value="Alpha-hemoglobin-stabilizing protein"/>
    <property type="match status" value="1"/>
</dbReference>
<dbReference type="Gene3D" id="1.20.58.420">
    <property type="entry name" value="AHSP"/>
    <property type="match status" value="1"/>
</dbReference>
<dbReference type="InterPro" id="IPR015317">
    <property type="entry name" value="A_Hb_stabilising_prot"/>
</dbReference>
<dbReference type="InterPro" id="IPR036468">
    <property type="entry name" value="AHSP_sf"/>
</dbReference>
<dbReference type="PANTHER" id="PTHR15914">
    <property type="entry name" value="ALPHA-HEMOGLOBIN-STABILIZING PROTEIN"/>
    <property type="match status" value="1"/>
</dbReference>
<dbReference type="PANTHER" id="PTHR15914:SF0">
    <property type="entry name" value="ALPHA-HEMOGLOBIN-STABILIZING PROTEIN"/>
    <property type="match status" value="1"/>
</dbReference>
<dbReference type="Pfam" id="PF09236">
    <property type="entry name" value="AHSP"/>
    <property type="match status" value="1"/>
</dbReference>
<dbReference type="SUPFAM" id="SSF109751">
    <property type="entry name" value="Alpha-hemoglobin stabilizing protein AHSP"/>
    <property type="match status" value="1"/>
</dbReference>
<protein>
    <recommendedName>
        <fullName>Alpha-hemoglobin-stabilizing protein</fullName>
    </recommendedName>
    <alternativeName>
        <fullName>Erythroid differentiation-related factor</fullName>
    </alternativeName>
    <alternativeName>
        <fullName>Erythroid-associated factor</fullName>
    </alternativeName>
</protein>
<accession>Q9NZD4</accession>
<accession>Q8TD01</accession>
<name>AHSP_HUMAN</name>
<proteinExistence type="evidence at protein level"/>
<feature type="chain" id="PRO_0000064509" description="Alpha-hemoglobin-stabilizing protein">
    <location>
        <begin position="1"/>
        <end position="102"/>
    </location>
</feature>
<feature type="sequence variant" id="VAR_050650" description="In dbSNP:rs36018996.">
    <original>P</original>
    <variation>T</variation>
    <location>
        <position position="100"/>
    </location>
</feature>
<feature type="sequence conflict" description="In Ref. 3; AAL82894." evidence="5" ref="3">
    <original>V</original>
    <variation>A</variation>
    <location>
        <position position="32"/>
    </location>
</feature>
<feature type="sequence conflict" description="In Ref. 3; AAL82894." evidence="5" ref="3">
    <original>D</original>
    <variation>N</variation>
    <location>
        <position position="87"/>
    </location>
</feature>
<feature type="helix" evidence="7">
    <location>
        <begin position="5"/>
        <end position="23"/>
    </location>
</feature>
<feature type="helix" evidence="7">
    <location>
        <begin position="27"/>
        <end position="29"/>
    </location>
</feature>
<feature type="helix" evidence="7">
    <location>
        <begin position="34"/>
        <end position="52"/>
    </location>
</feature>
<feature type="turn" evidence="7">
    <location>
        <begin position="53"/>
        <end position="55"/>
    </location>
</feature>
<feature type="helix" evidence="7">
    <location>
        <begin position="60"/>
        <end position="86"/>
    </location>
</feature>
<feature type="strand" evidence="6">
    <location>
        <begin position="97"/>
        <end position="99"/>
    </location>
</feature>
<organism>
    <name type="scientific">Homo sapiens</name>
    <name type="common">Human</name>
    <dbReference type="NCBI Taxonomy" id="9606"/>
    <lineage>
        <taxon>Eukaryota</taxon>
        <taxon>Metazoa</taxon>
        <taxon>Chordata</taxon>
        <taxon>Craniata</taxon>
        <taxon>Vertebrata</taxon>
        <taxon>Euteleostomi</taxon>
        <taxon>Mammalia</taxon>
        <taxon>Eutheria</taxon>
        <taxon>Euarchontoglires</taxon>
        <taxon>Primates</taxon>
        <taxon>Haplorrhini</taxon>
        <taxon>Catarrhini</taxon>
        <taxon>Hominidae</taxon>
        <taxon>Homo</taxon>
    </lineage>
</organism>
<sequence length="102" mass="11840">MALLKANKDLISAGLKEFSVLLNQQVFNDPLVSEEDMVTVVEDWMNFYINYYRQQVTGEPQERDKALQELRQELNTLANPFLAKYRDFLKSHELPSHPPPSS</sequence>
<evidence type="ECO:0000269" key="1">
    <source>
    </source>
</evidence>
<evidence type="ECO:0000269" key="2">
    <source>
    </source>
</evidence>
<evidence type="ECO:0000269" key="3">
    <source>
    </source>
</evidence>
<evidence type="ECO:0000269" key="4">
    <source>
    </source>
</evidence>
<evidence type="ECO:0000305" key="5"/>
<evidence type="ECO:0007829" key="6">
    <source>
        <dbReference type="PDB" id="1W0B"/>
    </source>
</evidence>
<evidence type="ECO:0007829" key="7">
    <source>
        <dbReference type="PDB" id="1Z8U"/>
    </source>
</evidence>